<comment type="function">
    <text evidence="1 2">Transfers a succinyl group from succinyl-CoA to L-homoserine, forming succinyl-L-homoserine.</text>
</comment>
<comment type="catalytic activity">
    <reaction evidence="1 2">
        <text>L-homoserine + succinyl-CoA = O-succinyl-L-homoserine + CoA</text>
        <dbReference type="Rhea" id="RHEA:22008"/>
        <dbReference type="ChEBI" id="CHEBI:57287"/>
        <dbReference type="ChEBI" id="CHEBI:57292"/>
        <dbReference type="ChEBI" id="CHEBI:57476"/>
        <dbReference type="ChEBI" id="CHEBI:57661"/>
        <dbReference type="EC" id="2.3.1.46"/>
    </reaction>
</comment>
<comment type="pathway">
    <text evidence="1">Amino-acid biosynthesis; L-methionine biosynthesis via de novo pathway; O-succinyl-L-homoserine from L-homoserine: step 1/1.</text>
</comment>
<comment type="subcellular location">
    <subcellularLocation>
        <location evidence="1">Cytoplasm</location>
    </subcellularLocation>
</comment>
<comment type="similarity">
    <text evidence="1">Belongs to the MetA family.</text>
</comment>
<keyword id="KW-0012">Acyltransferase</keyword>
<keyword id="KW-0028">Amino-acid biosynthesis</keyword>
<keyword id="KW-0963">Cytoplasm</keyword>
<keyword id="KW-0486">Methionine biosynthesis</keyword>
<keyword id="KW-1185">Reference proteome</keyword>
<keyword id="KW-0808">Transferase</keyword>
<protein>
    <recommendedName>
        <fullName evidence="1">Homoserine O-succinyltransferase</fullName>
        <shortName evidence="1 3">HST</shortName>
        <ecNumber evidence="1 2">2.3.1.46</ecNumber>
    </recommendedName>
    <alternativeName>
        <fullName evidence="1">Homoserine transsuccinylase</fullName>
        <shortName evidence="1">HTS</shortName>
    </alternativeName>
</protein>
<gene>
    <name evidence="1 3" type="primary">metAS</name>
    <name evidence="4" type="ordered locus">MCA1876</name>
</gene>
<accession>Q606Y5</accession>
<name>METAS_METCA</name>
<sequence>MPLVAHTDLPTFQRLREEGQDVLSVERAARQDIREMHIGLLNMMPDAALEATERQFFRLVGGANPIVQFHMHPFTIEGLPRGDQAAEHIARYYESFDRIREEGLDGLIVSGANVTQPHLQQEAFWQPLTEVFDWARSNVTSILCSCLATHALFQYSYGVERTHLGFKRWGVYSHRVVEPLHPLVADINTRFDVPHSRYNEIFREDMEAAGLRVLVESEEAGVHLAVSPDLFRVIYFQAHPEYDTVSLLKEYKREILRYFSGEREDYPPFPEHYFSLEVGAALNDYGQALRSARRAGRAPPPFPEEFVLRHLDNTWRDTAKAVFNNWLGKIYQITDQDRRKPFMAHIDPDNPLGLA</sequence>
<organism>
    <name type="scientific">Methylococcus capsulatus (strain ATCC 33009 / NCIMB 11132 / Bath)</name>
    <dbReference type="NCBI Taxonomy" id="243233"/>
    <lineage>
        <taxon>Bacteria</taxon>
        <taxon>Pseudomonadati</taxon>
        <taxon>Pseudomonadota</taxon>
        <taxon>Gammaproteobacteria</taxon>
        <taxon>Methylococcales</taxon>
        <taxon>Methylococcaceae</taxon>
        <taxon>Methylococcus</taxon>
    </lineage>
</organism>
<proteinExistence type="evidence at protein level"/>
<reference key="1">
    <citation type="journal article" date="2004" name="PLoS Biol.">
        <title>Genomic insights into methanotrophy: the complete genome sequence of Methylococcus capsulatus (Bath).</title>
        <authorList>
            <person name="Ward N.L."/>
            <person name="Larsen O."/>
            <person name="Sakwa J."/>
            <person name="Bruseth L."/>
            <person name="Khouri H.M."/>
            <person name="Durkin A.S."/>
            <person name="Dimitrov G."/>
            <person name="Jiang L."/>
            <person name="Scanlan D."/>
            <person name="Kang K.H."/>
            <person name="Lewis M.R."/>
            <person name="Nelson K.E."/>
            <person name="Methe B.A."/>
            <person name="Wu M."/>
            <person name="Heidelberg J.F."/>
            <person name="Paulsen I.T."/>
            <person name="Fouts D.E."/>
            <person name="Ravel J."/>
            <person name="Tettelin H."/>
            <person name="Ren Q."/>
            <person name="Read T.D."/>
            <person name="DeBoy R.T."/>
            <person name="Seshadri R."/>
            <person name="Salzberg S.L."/>
            <person name="Jensen H.B."/>
            <person name="Birkeland N.K."/>
            <person name="Nelson W.C."/>
            <person name="Dodson R.J."/>
            <person name="Grindhaug S.H."/>
            <person name="Holt I.E."/>
            <person name="Eidhammer I."/>
            <person name="Jonasen I."/>
            <person name="Vanaken S."/>
            <person name="Utterback T.R."/>
            <person name="Feldblyum T.V."/>
            <person name="Fraser C.M."/>
            <person name="Lillehaug J.R."/>
            <person name="Eisen J.A."/>
        </authorList>
    </citation>
    <scope>NUCLEOTIDE SEQUENCE [LARGE SCALE GENOMIC DNA]</scope>
    <source>
        <strain>ATCC 33009 / NCIMB 11132 / Bath</strain>
    </source>
</reference>
<reference key="2">
    <citation type="journal article" date="2017" name="Nat. Chem. Biol.">
        <title>Parallel evolution of non-homologous isofunctional enzymes in methionine biosynthesis.</title>
        <authorList>
            <person name="Bastard K."/>
            <person name="Perret A."/>
            <person name="Mariage A."/>
            <person name="Bessonnet T."/>
            <person name="Pinet-Turpault A."/>
            <person name="Petit J.L."/>
            <person name="Darii E."/>
            <person name="Bazire P."/>
            <person name="Vergne-Vaxelaire C."/>
            <person name="Brewee C."/>
            <person name="Debard A."/>
            <person name="Pellouin V."/>
            <person name="Besnard-Gonnet M."/>
            <person name="Artiguenave F."/>
            <person name="Medigue C."/>
            <person name="Vallenet D."/>
            <person name="Danchin A."/>
            <person name="Zaparucha A."/>
            <person name="Weissenbach J."/>
            <person name="Salanoubat M."/>
            <person name="de Berardinis V."/>
        </authorList>
    </citation>
    <scope>FUNCTION</scope>
    <scope>CATALYTIC ACTIVITY</scope>
</reference>
<dbReference type="EC" id="2.3.1.46" evidence="1 2"/>
<dbReference type="EMBL" id="AE017282">
    <property type="protein sequence ID" value="AAU91863.1"/>
    <property type="molecule type" value="Genomic_DNA"/>
</dbReference>
<dbReference type="RefSeq" id="WP_010961128.1">
    <property type="nucleotide sequence ID" value="NC_002977.6"/>
</dbReference>
<dbReference type="SMR" id="Q606Y5"/>
<dbReference type="STRING" id="243233.MCA1876"/>
<dbReference type="GeneID" id="88224121"/>
<dbReference type="KEGG" id="mca:MCA1876"/>
<dbReference type="eggNOG" id="COG1897">
    <property type="taxonomic scope" value="Bacteria"/>
</dbReference>
<dbReference type="HOGENOM" id="CLU_057851_0_1_6"/>
<dbReference type="UniPathway" id="UPA00051">
    <property type="reaction ID" value="UER00075"/>
</dbReference>
<dbReference type="Proteomes" id="UP000006821">
    <property type="component" value="Chromosome"/>
</dbReference>
<dbReference type="GO" id="GO:0005737">
    <property type="term" value="C:cytoplasm"/>
    <property type="evidence" value="ECO:0007669"/>
    <property type="project" value="UniProtKB-SubCell"/>
</dbReference>
<dbReference type="GO" id="GO:0004414">
    <property type="term" value="F:homoserine O-acetyltransferase activity"/>
    <property type="evidence" value="ECO:0007669"/>
    <property type="project" value="UniProtKB-UniRule"/>
</dbReference>
<dbReference type="GO" id="GO:0008899">
    <property type="term" value="F:homoserine O-succinyltransferase activity"/>
    <property type="evidence" value="ECO:0007669"/>
    <property type="project" value="UniProtKB-EC"/>
</dbReference>
<dbReference type="GO" id="GO:0009086">
    <property type="term" value="P:methionine biosynthetic process"/>
    <property type="evidence" value="ECO:0007669"/>
    <property type="project" value="UniProtKB-UniRule"/>
</dbReference>
<dbReference type="CDD" id="cd03131">
    <property type="entry name" value="GATase1_HTS"/>
    <property type="match status" value="1"/>
</dbReference>
<dbReference type="Gene3D" id="3.40.50.880">
    <property type="match status" value="1"/>
</dbReference>
<dbReference type="HAMAP" id="MF_00295">
    <property type="entry name" value="MetA_acyltransf"/>
    <property type="match status" value="1"/>
</dbReference>
<dbReference type="InterPro" id="IPR029062">
    <property type="entry name" value="Class_I_gatase-like"/>
</dbReference>
<dbReference type="InterPro" id="IPR033752">
    <property type="entry name" value="MetA_family"/>
</dbReference>
<dbReference type="NCBIfam" id="NF003776">
    <property type="entry name" value="PRK05368.1-3"/>
    <property type="match status" value="1"/>
</dbReference>
<dbReference type="PANTHER" id="PTHR20919">
    <property type="entry name" value="HOMOSERINE O-SUCCINYLTRANSFERASE"/>
    <property type="match status" value="1"/>
</dbReference>
<dbReference type="PANTHER" id="PTHR20919:SF0">
    <property type="entry name" value="HOMOSERINE O-SUCCINYLTRANSFERASE"/>
    <property type="match status" value="1"/>
</dbReference>
<dbReference type="Pfam" id="PF04204">
    <property type="entry name" value="HTS"/>
    <property type="match status" value="1"/>
</dbReference>
<dbReference type="PIRSF" id="PIRSF000450">
    <property type="entry name" value="H_ser_succinyltr"/>
    <property type="match status" value="1"/>
</dbReference>
<dbReference type="SUPFAM" id="SSF52317">
    <property type="entry name" value="Class I glutamine amidotransferase-like"/>
    <property type="match status" value="1"/>
</dbReference>
<feature type="chain" id="PRO_0000440351" description="Homoserine O-succinyltransferase">
    <location>
        <begin position="1"/>
        <end position="355"/>
    </location>
</feature>
<feature type="active site" description="Acyl-thioester intermediate" evidence="1">
    <location>
        <position position="146"/>
    </location>
</feature>
<feature type="active site" description="Proton acceptor" evidence="1">
    <location>
        <position position="239"/>
    </location>
</feature>
<feature type="active site" evidence="1">
    <location>
        <position position="241"/>
    </location>
</feature>
<feature type="binding site" evidence="1">
    <location>
        <position position="167"/>
    </location>
    <ligand>
        <name>substrate</name>
    </ligand>
</feature>
<feature type="binding site" evidence="1">
    <location>
        <position position="196"/>
    </location>
    <ligand>
        <name>substrate</name>
    </ligand>
</feature>
<feature type="binding site" evidence="1">
    <location>
        <position position="253"/>
    </location>
    <ligand>
        <name>substrate</name>
    </ligand>
</feature>
<feature type="site" description="Important for acyl-CoA specificity" evidence="1">
    <location>
        <position position="113"/>
    </location>
</feature>
<feature type="site" description="Important for acyl-CoA specificity" evidence="1">
    <location>
        <position position="147"/>
    </location>
</feature>
<feature type="site" description="Important for substrate specificity" evidence="1">
    <location>
        <position position="196"/>
    </location>
</feature>
<evidence type="ECO:0000255" key="1">
    <source>
        <dbReference type="HAMAP-Rule" id="MF_00295"/>
    </source>
</evidence>
<evidence type="ECO:0000269" key="2">
    <source>
    </source>
</evidence>
<evidence type="ECO:0000303" key="3">
    <source>
    </source>
</evidence>
<evidence type="ECO:0000312" key="4">
    <source>
        <dbReference type="EMBL" id="AAU91863.1"/>
    </source>
</evidence>